<feature type="signal peptide" evidence="4">
    <location>
        <begin position="1"/>
        <end position="23"/>
    </location>
</feature>
<feature type="chain" id="PRO_0000248946" description="High-affinity zinc uptake system protein ZnuA">
    <location>
        <begin position="24"/>
        <end position="334"/>
    </location>
</feature>
<feature type="region of interest" description="Disordered" evidence="5">
    <location>
        <begin position="120"/>
        <end position="147"/>
    </location>
</feature>
<feature type="binding site" evidence="2">
    <location>
        <position position="60"/>
    </location>
    <ligand>
        <name>Zn(2+)</name>
        <dbReference type="ChEBI" id="CHEBI:29105"/>
    </ligand>
</feature>
<feature type="binding site" evidence="2">
    <location>
        <position position="61"/>
    </location>
    <ligand>
        <name>Zn(2+)</name>
        <dbReference type="ChEBI" id="CHEBI:29105"/>
    </ligand>
</feature>
<feature type="binding site" evidence="2">
    <location>
        <position position="168"/>
    </location>
    <ligand>
        <name>Zn(2+)</name>
        <dbReference type="ChEBI" id="CHEBI:29105"/>
    </ligand>
</feature>
<feature type="binding site" evidence="2">
    <location>
        <position position="232"/>
    </location>
    <ligand>
        <name>Zn(2+)</name>
        <dbReference type="ChEBI" id="CHEBI:29105"/>
    </ligand>
</feature>
<feature type="disulfide bond" evidence="2">
    <location>
        <begin position="277"/>
        <end position="331"/>
    </location>
</feature>
<proteinExistence type="inferred from homology"/>
<keyword id="KW-1015">Disulfide bond</keyword>
<keyword id="KW-0406">Ion transport</keyword>
<keyword id="KW-0479">Metal-binding</keyword>
<keyword id="KW-0574">Periplasm</keyword>
<keyword id="KW-0732">Signal</keyword>
<keyword id="KW-0813">Transport</keyword>
<keyword id="KW-0843">Virulence</keyword>
<keyword id="KW-0862">Zinc</keyword>
<keyword id="KW-0864">Zinc transport</keyword>
<comment type="function">
    <text evidence="3">Part of the ATP-binding cassette (ABC) transport system ZnuABC involved in zinc import (By similarity). Binds zinc with high affinity and specificity and delivers it to the membrane permease for translocation into the cytoplasm (By similarity). Required for survival and normal growth under low Zn (2+) concentrations (By similarity). Also required for virulence and intracellular growth in host cells (By similarity).</text>
</comment>
<comment type="subcellular location">
    <subcellularLocation>
        <location evidence="1">Periplasm</location>
    </subcellularLocation>
</comment>
<comment type="similarity">
    <text evidence="6">Belongs to the bacterial solute-binding protein 9 family.</text>
</comment>
<accession>Q8FUU6</accession>
<accession>G0KEC0</accession>
<organism>
    <name type="scientific">Brucella suis biovar 1 (strain 1330)</name>
    <dbReference type="NCBI Taxonomy" id="204722"/>
    <lineage>
        <taxon>Bacteria</taxon>
        <taxon>Pseudomonadati</taxon>
        <taxon>Pseudomonadota</taxon>
        <taxon>Alphaproteobacteria</taxon>
        <taxon>Hyphomicrobiales</taxon>
        <taxon>Brucellaceae</taxon>
        <taxon>Brucella/Ochrobactrum group</taxon>
        <taxon>Brucella</taxon>
    </lineage>
</organism>
<sequence>MKNLHSLFLASAFLAGFCGSSLAGEREGVVVSIKPLHSIVSAVMQGVGKPKLIVQGAGSEHVYSLKPSDAEAIEHAKVIFWAGPSMETFLDKPIDTLGEGAKVVALGDAKGLTKLKFREGGPFEAHDHGHGGSHEEEHDAHGSGDHDHAAEVAEEGHEHHHHGEYDLHFWLDPQNGKILAADIAKTLGESDPEHAAQYEKNAKAYGEKLDALTREVAAELKPVKDKPFIVFHDAYQYFENRFGMKAAGSITVSPEKAPGAARIQQIHDKIKSLGATCVFSEPQFEPKLVKTVVDGTKARTGVLDPLGAELKDGPDLYPQLIRNLANSLKDCLSK</sequence>
<reference key="1">
    <citation type="journal article" date="2002" name="Proc. Natl. Acad. Sci. U.S.A.">
        <title>The Brucella suis genome reveals fundamental similarities between animal and plant pathogens and symbionts.</title>
        <authorList>
            <person name="Paulsen I.T."/>
            <person name="Seshadri R."/>
            <person name="Nelson K.E."/>
            <person name="Eisen J.A."/>
            <person name="Heidelberg J.F."/>
            <person name="Read T.D."/>
            <person name="Dodson R.J."/>
            <person name="Umayam L.A."/>
            <person name="Brinkac L.M."/>
            <person name="Beanan M.J."/>
            <person name="Daugherty S.C."/>
            <person name="DeBoy R.T."/>
            <person name="Durkin A.S."/>
            <person name="Kolonay J.F."/>
            <person name="Madupu R."/>
            <person name="Nelson W.C."/>
            <person name="Ayodeji B."/>
            <person name="Kraul M."/>
            <person name="Shetty J."/>
            <person name="Malek J.A."/>
            <person name="Van Aken S.E."/>
            <person name="Riedmuller S."/>
            <person name="Tettelin H."/>
            <person name="Gill S.R."/>
            <person name="White O."/>
            <person name="Salzberg S.L."/>
            <person name="Hoover D.L."/>
            <person name="Lindler L.E."/>
            <person name="Halling S.M."/>
            <person name="Boyle S.M."/>
            <person name="Fraser C.M."/>
        </authorList>
    </citation>
    <scope>NUCLEOTIDE SEQUENCE [LARGE SCALE GENOMIC DNA]</scope>
    <source>
        <strain>1330</strain>
    </source>
</reference>
<reference key="2">
    <citation type="journal article" date="2011" name="J. Bacteriol.">
        <title>Revised genome sequence of Brucella suis 1330.</title>
        <authorList>
            <person name="Tae H."/>
            <person name="Shallom S."/>
            <person name="Settlage R."/>
            <person name="Preston D."/>
            <person name="Adams L.G."/>
            <person name="Garner H.R."/>
        </authorList>
    </citation>
    <scope>NUCLEOTIDE SEQUENCE [LARGE SCALE GENOMIC DNA]</scope>
    <source>
        <strain>1330</strain>
    </source>
</reference>
<dbReference type="EMBL" id="AE014292">
    <property type="protein sequence ID" value="AAN34282.1"/>
    <property type="molecule type" value="Genomic_DNA"/>
</dbReference>
<dbReference type="EMBL" id="CP002998">
    <property type="protein sequence ID" value="AEM20558.1"/>
    <property type="molecule type" value="Genomic_DNA"/>
</dbReference>
<dbReference type="RefSeq" id="WP_004680953.1">
    <property type="nucleotide sequence ID" value="NZ_KN046805.1"/>
</dbReference>
<dbReference type="SMR" id="Q8FUU6"/>
<dbReference type="GeneID" id="97535843"/>
<dbReference type="KEGG" id="bms:BRA1122"/>
<dbReference type="KEGG" id="bsi:BS1330_II1113"/>
<dbReference type="PATRIC" id="fig|204722.22.peg.2711"/>
<dbReference type="HOGENOM" id="CLU_016838_1_2_5"/>
<dbReference type="PhylomeDB" id="Q8FUU6"/>
<dbReference type="PRO" id="PR:Q8FUU6"/>
<dbReference type="Proteomes" id="UP000007104">
    <property type="component" value="Chromosome II"/>
</dbReference>
<dbReference type="GO" id="GO:0042597">
    <property type="term" value="C:periplasmic space"/>
    <property type="evidence" value="ECO:0007669"/>
    <property type="project" value="UniProtKB-SubCell"/>
</dbReference>
<dbReference type="GO" id="GO:0046872">
    <property type="term" value="F:metal ion binding"/>
    <property type="evidence" value="ECO:0007669"/>
    <property type="project" value="UniProtKB-KW"/>
</dbReference>
<dbReference type="GO" id="GO:0006829">
    <property type="term" value="P:zinc ion transport"/>
    <property type="evidence" value="ECO:0007669"/>
    <property type="project" value="UniProtKB-KW"/>
</dbReference>
<dbReference type="CDD" id="cd01019">
    <property type="entry name" value="ZnuA"/>
    <property type="match status" value="1"/>
</dbReference>
<dbReference type="Gene3D" id="3.40.50.1980">
    <property type="entry name" value="Nitrogenase molybdenum iron protein domain"/>
    <property type="match status" value="2"/>
</dbReference>
<dbReference type="InterPro" id="IPR050492">
    <property type="entry name" value="Bact_metal-bind_prot9"/>
</dbReference>
<dbReference type="InterPro" id="IPR035520">
    <property type="entry name" value="ZnuA"/>
</dbReference>
<dbReference type="InterPro" id="IPR006127">
    <property type="entry name" value="ZnuA-like"/>
</dbReference>
<dbReference type="NCBIfam" id="NF007091">
    <property type="entry name" value="PRK09545.1"/>
    <property type="match status" value="1"/>
</dbReference>
<dbReference type="PANTHER" id="PTHR42953:SF3">
    <property type="entry name" value="HIGH-AFFINITY ZINC UPTAKE SYSTEM PROTEIN ZNUA"/>
    <property type="match status" value="1"/>
</dbReference>
<dbReference type="PANTHER" id="PTHR42953">
    <property type="entry name" value="HIGH-AFFINITY ZINC UPTAKE SYSTEM PROTEIN ZNUA-RELATED"/>
    <property type="match status" value="1"/>
</dbReference>
<dbReference type="Pfam" id="PF01297">
    <property type="entry name" value="ZnuA"/>
    <property type="match status" value="1"/>
</dbReference>
<dbReference type="SUPFAM" id="SSF53807">
    <property type="entry name" value="Helical backbone' metal receptor"/>
    <property type="match status" value="1"/>
</dbReference>
<protein>
    <recommendedName>
        <fullName>High-affinity zinc uptake system protein ZnuA</fullName>
    </recommendedName>
</protein>
<gene>
    <name type="primary">znuA</name>
    <name type="ordered locus">BRA1122</name>
    <name type="ordered locus">BS1330_II1113</name>
</gene>
<name>ZNUA_BRUSU</name>
<evidence type="ECO:0000250" key="1">
    <source>
        <dbReference type="UniProtKB" id="A1B9L0"/>
    </source>
</evidence>
<evidence type="ECO:0000250" key="2">
    <source>
        <dbReference type="UniProtKB" id="P39172"/>
    </source>
</evidence>
<evidence type="ECO:0000250" key="3">
    <source>
        <dbReference type="UniProtKB" id="Q576K1"/>
    </source>
</evidence>
<evidence type="ECO:0000255" key="4"/>
<evidence type="ECO:0000256" key="5">
    <source>
        <dbReference type="SAM" id="MobiDB-lite"/>
    </source>
</evidence>
<evidence type="ECO:0000305" key="6"/>